<feature type="initiator methionine" description="Removed" evidence="2">
    <location>
        <position position="1"/>
    </location>
</feature>
<feature type="chain" id="PRO_0000083593" description="Isocitrate dehydrogenase [NADP]">
    <location>
        <begin position="2"/>
        <end position="741"/>
    </location>
</feature>
<feature type="binding site" evidence="4 8">
    <location>
        <position position="85"/>
    </location>
    <ligand>
        <name>NADP(+)</name>
        <dbReference type="ChEBI" id="CHEBI:58349"/>
    </ligand>
</feature>
<feature type="binding site" evidence="4 8">
    <location>
        <position position="87"/>
    </location>
    <ligand>
        <name>NADP(+)</name>
        <dbReference type="ChEBI" id="CHEBI:58349"/>
    </ligand>
</feature>
<feature type="binding site" evidence="3 7">
    <location>
        <position position="132"/>
    </location>
    <ligand>
        <name>D-threo-isocitrate</name>
        <dbReference type="ChEBI" id="CHEBI:15562"/>
    </ligand>
</feature>
<feature type="binding site" evidence="3 7">
    <location>
        <position position="135"/>
    </location>
    <ligand>
        <name>D-threo-isocitrate</name>
        <dbReference type="ChEBI" id="CHEBI:15562"/>
    </ligand>
</feature>
<feature type="binding site" evidence="4 8">
    <location>
        <position position="135"/>
    </location>
    <ligand>
        <name>NADP(+)</name>
        <dbReference type="ChEBI" id="CHEBI:58349"/>
    </ligand>
</feature>
<feature type="binding site" evidence="3 7">
    <location>
        <position position="139"/>
    </location>
    <ligand>
        <name>D-threo-isocitrate</name>
        <dbReference type="ChEBI" id="CHEBI:15562"/>
    </ligand>
</feature>
<feature type="binding site" evidence="3 7">
    <location>
        <position position="145"/>
    </location>
    <ligand>
        <name>D-threo-isocitrate</name>
        <dbReference type="ChEBI" id="CHEBI:15562"/>
    </ligand>
</feature>
<feature type="binding site" evidence="3 7">
    <location>
        <position position="255"/>
    </location>
    <ligand>
        <name>D-threo-isocitrate</name>
        <dbReference type="ChEBI" id="CHEBI:15562"/>
    </ligand>
</feature>
<feature type="binding site" evidence="3 7">
    <location>
        <position position="350"/>
    </location>
    <ligand>
        <name>Mn(2+)</name>
        <dbReference type="ChEBI" id="CHEBI:29035"/>
    </ligand>
</feature>
<feature type="binding site" evidence="3 7">
    <location>
        <position position="420"/>
    </location>
    <ligand>
        <name>D-threo-isocitrate</name>
        <dbReference type="ChEBI" id="CHEBI:15562"/>
    </ligand>
</feature>
<feature type="binding site" evidence="3 7">
    <location>
        <position position="547"/>
    </location>
    <ligand>
        <name>D-threo-isocitrate</name>
        <dbReference type="ChEBI" id="CHEBI:15562"/>
    </ligand>
</feature>
<feature type="binding site" evidence="3 7">
    <location>
        <position position="548"/>
    </location>
    <ligand>
        <name>Mn(2+)</name>
        <dbReference type="ChEBI" id="CHEBI:29035"/>
    </ligand>
</feature>
<feature type="binding site" evidence="4 8">
    <location>
        <position position="585"/>
    </location>
    <ligand>
        <name>NADP(+)</name>
        <dbReference type="ChEBI" id="CHEBI:58349"/>
    </ligand>
</feature>
<feature type="binding site" evidence="4 8">
    <location>
        <position position="589"/>
    </location>
    <ligand>
        <name>NADP(+)</name>
        <dbReference type="ChEBI" id="CHEBI:58349"/>
    </ligand>
</feature>
<feature type="binding site" evidence="4 8">
    <location>
        <position position="600"/>
    </location>
    <ligand>
        <name>NADP(+)</name>
        <dbReference type="ChEBI" id="CHEBI:58349"/>
    </ligand>
</feature>
<feature type="binding site" evidence="4 8">
    <location>
        <position position="602"/>
    </location>
    <ligand>
        <name>NADP(+)</name>
        <dbReference type="ChEBI" id="CHEBI:58349"/>
    </ligand>
</feature>
<feature type="binding site" evidence="4 8">
    <location>
        <position position="649"/>
    </location>
    <ligand>
        <name>NADP(+)</name>
        <dbReference type="ChEBI" id="CHEBI:58349"/>
    </ligand>
</feature>
<feature type="strand" evidence="9">
    <location>
        <begin position="5"/>
        <end position="10"/>
    </location>
</feature>
<feature type="helix" evidence="9">
    <location>
        <begin position="13"/>
        <end position="31"/>
    </location>
</feature>
<feature type="turn" evidence="9">
    <location>
        <begin position="32"/>
        <end position="34"/>
    </location>
</feature>
<feature type="strand" evidence="9">
    <location>
        <begin position="36"/>
        <end position="41"/>
    </location>
</feature>
<feature type="helix" evidence="9">
    <location>
        <begin position="44"/>
        <end position="51"/>
    </location>
</feature>
<feature type="helix" evidence="9">
    <location>
        <begin position="53"/>
        <end position="55"/>
    </location>
</feature>
<feature type="turn" evidence="9">
    <location>
        <begin position="58"/>
        <end position="60"/>
    </location>
</feature>
<feature type="helix" evidence="9">
    <location>
        <begin position="65"/>
        <end position="72"/>
    </location>
</feature>
<feature type="strand" evidence="9">
    <location>
        <begin position="79"/>
        <end position="82"/>
    </location>
</feature>
<feature type="helix" evidence="9">
    <location>
        <begin position="90"/>
        <end position="102"/>
    </location>
</feature>
<feature type="helix" evidence="9">
    <location>
        <begin position="117"/>
        <end position="129"/>
    </location>
</feature>
<feature type="strand" evidence="9">
    <location>
        <begin position="130"/>
        <end position="132"/>
    </location>
</feature>
<feature type="helix" evidence="9">
    <location>
        <begin position="135"/>
        <end position="138"/>
    </location>
</feature>
<feature type="strand" evidence="9">
    <location>
        <begin position="143"/>
        <end position="146"/>
    </location>
</feature>
<feature type="helix" evidence="9">
    <location>
        <begin position="149"/>
        <end position="157"/>
    </location>
</feature>
<feature type="strand" evidence="9">
    <location>
        <begin position="172"/>
        <end position="174"/>
    </location>
</feature>
<feature type="strand" evidence="9">
    <location>
        <begin position="177"/>
        <end position="180"/>
    </location>
</feature>
<feature type="helix" evidence="9">
    <location>
        <begin position="181"/>
        <end position="184"/>
    </location>
</feature>
<feature type="strand" evidence="9">
    <location>
        <begin position="186"/>
        <end position="189"/>
    </location>
</feature>
<feature type="strand" evidence="9">
    <location>
        <begin position="192"/>
        <end position="202"/>
    </location>
</feature>
<feature type="strand" evidence="9">
    <location>
        <begin position="207"/>
        <end position="216"/>
    </location>
</feature>
<feature type="strand" evidence="9">
    <location>
        <begin position="221"/>
        <end position="227"/>
    </location>
</feature>
<feature type="helix" evidence="9">
    <location>
        <begin position="229"/>
        <end position="246"/>
    </location>
</feature>
<feature type="strand" evidence="9">
    <location>
        <begin position="249"/>
        <end position="252"/>
    </location>
</feature>
<feature type="turn" evidence="9">
    <location>
        <begin position="256"/>
        <end position="258"/>
    </location>
</feature>
<feature type="helix" evidence="9">
    <location>
        <begin position="262"/>
        <end position="274"/>
    </location>
</feature>
<feature type="helix" evidence="9">
    <location>
        <begin position="276"/>
        <end position="281"/>
    </location>
</feature>
<feature type="helix" evidence="9">
    <location>
        <begin position="283"/>
        <end position="288"/>
    </location>
</feature>
<feature type="helix" evidence="9">
    <location>
        <begin position="293"/>
        <end position="295"/>
    </location>
</feature>
<feature type="helix" evidence="9">
    <location>
        <begin position="297"/>
        <end position="303"/>
    </location>
</feature>
<feature type="helix" evidence="9">
    <location>
        <begin position="304"/>
        <end position="306"/>
    </location>
</feature>
<feature type="helix" evidence="9">
    <location>
        <begin position="309"/>
        <end position="325"/>
    </location>
</feature>
<feature type="strand" evidence="9">
    <location>
        <begin position="331"/>
        <end position="333"/>
    </location>
</feature>
<feature type="turn" evidence="9">
    <location>
        <begin position="334"/>
        <end position="337"/>
    </location>
</feature>
<feature type="turn" evidence="10">
    <location>
        <begin position="340"/>
        <end position="342"/>
    </location>
</feature>
<feature type="strand" evidence="9">
    <location>
        <begin position="346"/>
        <end position="348"/>
    </location>
</feature>
<feature type="helix" evidence="9">
    <location>
        <begin position="349"/>
        <end position="358"/>
    </location>
</feature>
<feature type="turn" evidence="9">
    <location>
        <begin position="359"/>
        <end position="361"/>
    </location>
</feature>
<feature type="strand" evidence="9">
    <location>
        <begin position="362"/>
        <end position="364"/>
    </location>
</feature>
<feature type="strand" evidence="9">
    <location>
        <begin position="368"/>
        <end position="376"/>
    </location>
</feature>
<feature type="helix" evidence="9">
    <location>
        <begin position="380"/>
        <end position="396"/>
    </location>
</feature>
<feature type="turn" evidence="9">
    <location>
        <begin position="401"/>
        <end position="403"/>
    </location>
</feature>
<feature type="strand" evidence="9">
    <location>
        <begin position="409"/>
        <end position="411"/>
    </location>
</feature>
<feature type="turn" evidence="9">
    <location>
        <begin position="414"/>
        <end position="416"/>
    </location>
</feature>
<feature type="helix" evidence="9">
    <location>
        <begin position="418"/>
        <end position="421"/>
    </location>
</feature>
<feature type="helix" evidence="9">
    <location>
        <begin position="423"/>
        <end position="425"/>
    </location>
</feature>
<feature type="strand" evidence="9">
    <location>
        <begin position="426"/>
        <end position="428"/>
    </location>
</feature>
<feature type="strand" evidence="9">
    <location>
        <begin position="430"/>
        <end position="439"/>
    </location>
</feature>
<feature type="strand" evidence="9">
    <location>
        <begin position="444"/>
        <end position="450"/>
    </location>
</feature>
<feature type="strand" evidence="9">
    <location>
        <begin position="455"/>
        <end position="461"/>
    </location>
</feature>
<feature type="helix" evidence="9">
    <location>
        <begin position="463"/>
        <end position="480"/>
    </location>
</feature>
<feature type="strand" evidence="9">
    <location>
        <begin position="484"/>
        <end position="487"/>
    </location>
</feature>
<feature type="helix" evidence="9">
    <location>
        <begin position="493"/>
        <end position="506"/>
    </location>
</feature>
<feature type="strand" evidence="9">
    <location>
        <begin position="516"/>
        <end position="519"/>
    </location>
</feature>
<feature type="helix" evidence="9">
    <location>
        <begin position="521"/>
        <end position="533"/>
    </location>
</feature>
<feature type="strand" evidence="9">
    <location>
        <begin position="539"/>
        <end position="542"/>
    </location>
</feature>
<feature type="helix" evidence="9">
    <location>
        <begin position="544"/>
        <end position="559"/>
    </location>
</feature>
<feature type="strand" evidence="9">
    <location>
        <begin position="562"/>
        <end position="571"/>
    </location>
</feature>
<feature type="strand" evidence="9">
    <location>
        <begin position="576"/>
        <end position="580"/>
    </location>
</feature>
<feature type="helix" evidence="9">
    <location>
        <begin position="587"/>
        <end position="596"/>
    </location>
</feature>
<feature type="helix" evidence="9">
    <location>
        <begin position="604"/>
        <end position="620"/>
    </location>
</feature>
<feature type="helix" evidence="9">
    <location>
        <begin position="624"/>
        <end position="642"/>
    </location>
</feature>
<feature type="strand" evidence="9">
    <location>
        <begin position="649"/>
        <end position="653"/>
    </location>
</feature>
<feature type="helix" evidence="9">
    <location>
        <begin position="656"/>
        <end position="673"/>
    </location>
</feature>
<feature type="helix" evidence="9">
    <location>
        <begin position="678"/>
        <end position="693"/>
    </location>
</feature>
<feature type="helix" evidence="9">
    <location>
        <begin position="695"/>
        <end position="703"/>
    </location>
</feature>
<feature type="strand" evidence="10">
    <location>
        <begin position="706"/>
        <end position="708"/>
    </location>
</feature>
<feature type="strand" evidence="9">
    <location>
        <begin position="715"/>
        <end position="717"/>
    </location>
</feature>
<feature type="helix" evidence="9">
    <location>
        <begin position="720"/>
        <end position="727"/>
    </location>
</feature>
<feature type="helix" evidence="9">
    <location>
        <begin position="731"/>
        <end position="736"/>
    </location>
</feature>
<feature type="turn" evidence="9">
    <location>
        <begin position="737"/>
        <end position="739"/>
    </location>
</feature>
<organism>
    <name type="scientific">Azotobacter vinelandii</name>
    <dbReference type="NCBI Taxonomy" id="354"/>
    <lineage>
        <taxon>Bacteria</taxon>
        <taxon>Pseudomonadati</taxon>
        <taxon>Pseudomonadota</taxon>
        <taxon>Gammaproteobacteria</taxon>
        <taxon>Pseudomonadales</taxon>
        <taxon>Pseudomonadaceae</taxon>
        <taxon>Azotobacter</taxon>
    </lineage>
</organism>
<evidence type="ECO:0000250" key="1">
    <source>
        <dbReference type="UniProtKB" id="P50216"/>
    </source>
</evidence>
<evidence type="ECO:0000269" key="2">
    <source>
    </source>
</evidence>
<evidence type="ECO:0000269" key="3">
    <source>
    </source>
</evidence>
<evidence type="ECO:0000269" key="4">
    <source>
    </source>
</evidence>
<evidence type="ECO:0000303" key="5">
    <source>
    </source>
</evidence>
<evidence type="ECO:0000305" key="6"/>
<evidence type="ECO:0007744" key="7">
    <source>
        <dbReference type="PDB" id="1ITW"/>
    </source>
</evidence>
<evidence type="ECO:0007744" key="8">
    <source>
        <dbReference type="PDB" id="1J1W"/>
    </source>
</evidence>
<evidence type="ECO:0007829" key="9">
    <source>
        <dbReference type="PDB" id="1ITW"/>
    </source>
</evidence>
<evidence type="ECO:0007829" key="10">
    <source>
        <dbReference type="PDB" id="1J1W"/>
    </source>
</evidence>
<accession>P16100</accession>
<protein>
    <recommendedName>
        <fullName evidence="5">Isocitrate dehydrogenase [NADP]</fullName>
        <shortName evidence="5">IDH</shortName>
        <ecNumber evidence="2">1.1.1.42</ecNumber>
    </recommendedName>
    <alternativeName>
        <fullName>Oxalosuccinate decarboxylase</fullName>
    </alternativeName>
</protein>
<dbReference type="EC" id="1.1.1.42" evidence="2"/>
<dbReference type="EMBL" id="D73443">
    <property type="protein sequence ID" value="BAA11169.1"/>
    <property type="molecule type" value="Genomic_DNA"/>
</dbReference>
<dbReference type="PIR" id="A10759">
    <property type="entry name" value="A10759"/>
</dbReference>
<dbReference type="PIR" id="JC7822">
    <property type="entry name" value="JC7822"/>
</dbReference>
<dbReference type="PDB" id="1ITW">
    <property type="method" value="X-ray"/>
    <property type="resolution" value="1.95 A"/>
    <property type="chains" value="A/B/C/D=1-741"/>
</dbReference>
<dbReference type="PDB" id="1J1W">
    <property type="method" value="X-ray"/>
    <property type="resolution" value="3.20 A"/>
    <property type="chains" value="A/B/C/D=1-741"/>
</dbReference>
<dbReference type="PDBsum" id="1ITW"/>
<dbReference type="PDBsum" id="1J1W"/>
<dbReference type="SMR" id="P16100"/>
<dbReference type="DrugBank" id="DB01727">
    <property type="generic name" value="Isocitric Acid"/>
</dbReference>
<dbReference type="DrugBank" id="DB03461">
    <property type="generic name" value="Nicotinamide adenine dinucleotide phosphate"/>
</dbReference>
<dbReference type="BioCyc" id="MetaCyc:MONOMER-13167"/>
<dbReference type="EvolutionaryTrace" id="P16100"/>
<dbReference type="GO" id="GO:0005737">
    <property type="term" value="C:cytoplasm"/>
    <property type="evidence" value="ECO:0007669"/>
    <property type="project" value="UniProtKB-SubCell"/>
</dbReference>
<dbReference type="GO" id="GO:0004450">
    <property type="term" value="F:isocitrate dehydrogenase (NADP+) activity"/>
    <property type="evidence" value="ECO:0007669"/>
    <property type="project" value="UniProtKB-EC"/>
</dbReference>
<dbReference type="GO" id="GO:0046872">
    <property type="term" value="F:metal ion binding"/>
    <property type="evidence" value="ECO:0007669"/>
    <property type="project" value="UniProtKB-KW"/>
</dbReference>
<dbReference type="GO" id="GO:0006097">
    <property type="term" value="P:glyoxylate cycle"/>
    <property type="evidence" value="ECO:0007669"/>
    <property type="project" value="UniProtKB-KW"/>
</dbReference>
<dbReference type="GO" id="GO:0006099">
    <property type="term" value="P:tricarboxylic acid cycle"/>
    <property type="evidence" value="ECO:0007669"/>
    <property type="project" value="UniProtKB-KW"/>
</dbReference>
<dbReference type="Gene3D" id="3.40.718.10">
    <property type="entry name" value="Isopropylmalate Dehydrogenase"/>
    <property type="match status" value="1"/>
</dbReference>
<dbReference type="InterPro" id="IPR004436">
    <property type="entry name" value="Isocitrate_DH_NADP_mono"/>
</dbReference>
<dbReference type="NCBIfam" id="TIGR00178">
    <property type="entry name" value="monomer_idh"/>
    <property type="match status" value="1"/>
</dbReference>
<dbReference type="PANTHER" id="PTHR36999:SF1">
    <property type="entry name" value="ISOCITRATE DEHYDROGENASE (NADP(+))"/>
    <property type="match status" value="1"/>
</dbReference>
<dbReference type="PANTHER" id="PTHR36999">
    <property type="entry name" value="ISOCITRATE DEHYDROGENASE [NADP]"/>
    <property type="match status" value="1"/>
</dbReference>
<dbReference type="Pfam" id="PF03971">
    <property type="entry name" value="IDH"/>
    <property type="match status" value="1"/>
</dbReference>
<dbReference type="PIRSF" id="PIRSF009407">
    <property type="entry name" value="IDH_monmr"/>
    <property type="match status" value="1"/>
</dbReference>
<dbReference type="SUPFAM" id="SSF53659">
    <property type="entry name" value="Isocitrate/Isopropylmalate dehydrogenase-like"/>
    <property type="match status" value="1"/>
</dbReference>
<sequence>MSTPKIIYTLTDEAPALATYSLLPIIKAFTGSSGIAVETRDISLAGRLIATFPEYLTDTQKISDDLAELGKLATTPDANIIKLPNISASVPQLKAAIKELQQQGYKLPDYPEEPKTDTEKDVKARYDKIKGSAVNPVLREGNSDRRAPLSVKNYARKHPHKMGAWSADSKSHVAHMDNGDFYGSEKAALIGAPGSVKIELIAKDGSSTVLKAKTSVQAGEIIDSSVMSKNALRNFIAAEIEDAKKQGVLLSVHLKATMMKVSDPIMFGQIVSEFYKDALTKHAEVLKQIGFDVNNGIGDLYARIKTLPEAKQKEIEADIQAVYAQRPQLAMVNSDKGITNLHVPSDVIVDASMPAMIRDSGKMWGPDGKLHDTKAVIPDRCYAGVYQVVIEDCKQHGAFDPTTMGSVPNVGLMAQKAEEYGSHDKTFQIPADGVVRVTDESGKLLLEQSVEAGDIWRMCQAKDAPIQDWVKLAVNRARATNTPAVFWLDPARAHDAQVIAKVERYLKDYDTSGLDIRILSPVEATRFSLARIREGKDTISVTGNVLRDYLTDLFPIMELGTSAKMLSIVPLMSGGGLFETGAGGSAPKHVQQFLEEGYLRWDSLGEFLALAASLEHLGNAYKNPKALVLASTLDQATGKILDNNKSPARKVGEIDNRGSHFYLALYWAQALAAQTEDKELQAQFTGIAKALTDNETKIVGELAAAQGKPVDIAGYYHPNTDLTSKAIRPSATFNAALAPLA</sequence>
<gene>
    <name evidence="5" type="primary">icd</name>
</gene>
<proteinExistence type="evidence at protein level"/>
<name>IDH_AZOVI</name>
<comment type="function">
    <text evidence="2">Catalyzes the oxidative decarboxylation of isocitrate to 2-oxoglutarate and carbon dioxide with the concomitant reduction of NADP(+).</text>
</comment>
<comment type="catalytic activity">
    <reaction evidence="2">
        <text>D-threo-isocitrate + NADP(+) = 2-oxoglutarate + CO2 + NADPH</text>
        <dbReference type="Rhea" id="RHEA:19629"/>
        <dbReference type="ChEBI" id="CHEBI:15562"/>
        <dbReference type="ChEBI" id="CHEBI:16526"/>
        <dbReference type="ChEBI" id="CHEBI:16810"/>
        <dbReference type="ChEBI" id="CHEBI:57783"/>
        <dbReference type="ChEBI" id="CHEBI:58349"/>
        <dbReference type="EC" id="1.1.1.42"/>
    </reaction>
</comment>
<comment type="cofactor">
    <cofactor evidence="1">
        <name>Mg(2+)</name>
        <dbReference type="ChEBI" id="CHEBI:18420"/>
    </cofactor>
    <cofactor evidence="3">
        <name>Mn(2+)</name>
        <dbReference type="ChEBI" id="CHEBI:29035"/>
    </cofactor>
    <text evidence="3">Binds 1 Mg(2+) or Mn(2+) ion per subunit.</text>
</comment>
<comment type="activity regulation">
    <text evidence="4">Activity is inhibited in the presence of Ca(2+).</text>
</comment>
<comment type="biophysicochemical properties">
    <temperatureDependence>
        <text evidence="2">Optimum temperature is above 40 degrees Celsius.</text>
    </temperatureDependence>
</comment>
<comment type="subunit">
    <text evidence="2 3 4">Monomer.</text>
</comment>
<comment type="subcellular location">
    <subcellularLocation>
        <location evidence="6">Cytoplasm</location>
    </subcellularLocation>
</comment>
<comment type="domain">
    <text evidence="3 4">Consists of two distinct domains, a small domain (domain I) and a large domain (domain II) (PubMed:12467571, PubMed:12855708). The structure of the large domain repeats a motif observed in the dimeric IDH (PubMed:12467571). Such a fusional structure by domain duplication enables a single polypeptide chain to form a structure at the catalytic site that is homologous to the dimeric IDH, the catalytic site of which is located at the interface of two identical subunits (PubMed:12467571).</text>
</comment>
<comment type="similarity">
    <text evidence="6">Belongs to the monomeric-type IDH family.</text>
</comment>
<reference key="1">
    <citation type="journal article" date="2002" name="Biosci. Biotechnol. Biochem.">
        <title>Cloning, sequencing, and expression of a gene encoding the monomeric isocitrate dehydrogenase of the nitrogen-fixing bacterium, Azotobacter vinelandii.</title>
        <authorList>
            <person name="Sahara T."/>
            <person name="Takada Y."/>
            <person name="Takeuchi Y."/>
            <person name="Yamaoka N."/>
            <person name="Fukunaga N."/>
        </authorList>
    </citation>
    <scope>NUCLEOTIDE SEQUENCE [GENOMIC DNA]</scope>
    <scope>PROTEIN SEQUENCE OF 2-16</scope>
    <scope>FUNCTION</scope>
    <scope>CATALYTIC ACTIVITY</scope>
    <scope>BIOPHYSICOCHEMICAL PROPERTIES</scope>
    <scope>SUBUNIT</scope>
</reference>
<reference key="2">
    <citation type="journal article" date="1974" name="Biochemistry">
        <title>Triphosphopyridine nucleotide specific isocitrate dehydrogenase from Azotobacter vinelandii. Alkylation of a specific methionine residue and amino acid sequence of the peptide containing this residue.</title>
        <authorList>
            <person name="Edwards D.J."/>
            <person name="Heinrikson R.L."/>
            <person name="Chung A.E."/>
        </authorList>
    </citation>
    <scope>PRELIMINARY PROTEIN SEQUENCE OF 229-251 AND 255-260</scope>
</reference>
<reference evidence="7" key="3">
    <citation type="journal article" date="2002" name="Structure">
        <title>Structure of the monomeric isocitrate dehydrogenase: evidence of a protein monomerization by a domain duplication.</title>
        <authorList>
            <person name="Yasutake Y."/>
            <person name="Watanabe S."/>
            <person name="Yao M."/>
            <person name="Takada Y."/>
            <person name="Fukunaga N."/>
            <person name="Tanaka I."/>
        </authorList>
    </citation>
    <scope>X-RAY CRYSTALLOGRAPHY (1.95 ANGSTROMS) IN COMPLEX WITH ISOCITRATE AND MN(2+)</scope>
    <scope>COFACTOR</scope>
    <scope>SUBUNIT</scope>
    <scope>DOMAIN</scope>
    <source>
        <strain>IAM 1078</strain>
    </source>
</reference>
<reference evidence="8" key="4">
    <citation type="journal article" date="2003" name="J. Biol. Chem.">
        <title>Crystal structure of the monomeric isocitrate dehydrogenase in the presence of NADP+: insight into the cofactor recognition, catalysis, and evolution.</title>
        <authorList>
            <person name="Yasutake Y."/>
            <person name="Watanabe S."/>
            <person name="Yao M."/>
            <person name="Takada Y."/>
            <person name="Fukunaga N."/>
            <person name="Tanaka I."/>
        </authorList>
    </citation>
    <scope>X-RAY CRYSTALLOGRAPHY (3.20 ANGSTROMS) IN COMPLEX WITH NADP(+)</scope>
    <scope>ACTIVITY REGULATION</scope>
    <scope>SUBUNIT</scope>
    <scope>DOMAIN</scope>
    <source>
        <strain>IAM 1078</strain>
    </source>
</reference>
<keyword id="KW-0002">3D-structure</keyword>
<keyword id="KW-0963">Cytoplasm</keyword>
<keyword id="KW-0903">Direct protein sequencing</keyword>
<keyword id="KW-0329">Glyoxylate bypass</keyword>
<keyword id="KW-0460">Magnesium</keyword>
<keyword id="KW-0464">Manganese</keyword>
<keyword id="KW-0479">Metal-binding</keyword>
<keyword id="KW-0521">NADP</keyword>
<keyword id="KW-0560">Oxidoreductase</keyword>
<keyword id="KW-0816">Tricarboxylic acid cycle</keyword>